<comment type="function">
    <text evidence="1">Endolysin that degrades the junction between mycolic acid and peptidoglycans in the host cell wall and participates with the holin protein in the sequential events which lead to the programmed host cell lysis releasing the mature viral particles. Once the holin has permeabilized the host cell membrane, the endolysin can reach the periplasm and break down the mycolic acid-rich outer membrane. Cleaves the ester linkage joining the mycolic acid-rich outer membrane to arabinogalactan, releasing free mycolic acids.</text>
</comment>
<comment type="similarity">
    <text evidence="2">Belongs to the L5likevirus endolysin B protein family.</text>
</comment>
<accession>Q05328</accession>
<dbReference type="EC" id="3.1.-.-" evidence="1"/>
<dbReference type="EMBL" id="Z18946">
    <property type="protein sequence ID" value="CAA79388.1"/>
    <property type="molecule type" value="Genomic_DNA"/>
</dbReference>
<dbReference type="PIR" id="S30957">
    <property type="entry name" value="S30957"/>
</dbReference>
<dbReference type="RefSeq" id="NP_039676.1">
    <property type="nucleotide sequence ID" value="NC_001335.1"/>
</dbReference>
<dbReference type="SMR" id="Q05328"/>
<dbReference type="ESTHER" id="bpml5-vg12">
    <property type="family name" value="Lysin_B_C_ter"/>
</dbReference>
<dbReference type="GeneID" id="2942933"/>
<dbReference type="KEGG" id="vg:2942933"/>
<dbReference type="OrthoDB" id="4625at10239"/>
<dbReference type="Proteomes" id="UP000002123">
    <property type="component" value="Genome"/>
</dbReference>
<dbReference type="GO" id="GO:0016787">
    <property type="term" value="F:hydrolase activity"/>
    <property type="evidence" value="ECO:0007669"/>
    <property type="project" value="UniProtKB-KW"/>
</dbReference>
<dbReference type="GO" id="GO:0042742">
    <property type="term" value="P:defense response to bacterium"/>
    <property type="evidence" value="ECO:0007669"/>
    <property type="project" value="UniProtKB-KW"/>
</dbReference>
<dbReference type="GO" id="GO:0031640">
    <property type="term" value="P:killing of cells of another organism"/>
    <property type="evidence" value="ECO:0007669"/>
    <property type="project" value="UniProtKB-KW"/>
</dbReference>
<dbReference type="Gene3D" id="3.40.50.1820">
    <property type="entry name" value="alpha/beta hydrolase"/>
    <property type="match status" value="1"/>
</dbReference>
<dbReference type="Gene3D" id="1.10.10.1120">
    <property type="entry name" value="Lysin B, C-terminal linker domain"/>
    <property type="match status" value="1"/>
</dbReference>
<dbReference type="InterPro" id="IPR029058">
    <property type="entry name" value="AB_hydrolase_fold"/>
</dbReference>
<dbReference type="InterPro" id="IPR041855">
    <property type="entry name" value="Lysin_B_C_ter"/>
</dbReference>
<dbReference type="SUPFAM" id="SSF53474">
    <property type="entry name" value="alpha/beta-Hydrolases"/>
    <property type="match status" value="1"/>
</dbReference>
<organismHost>
    <name type="scientific">Mycobacterium</name>
    <dbReference type="NCBI Taxonomy" id="1763"/>
</organismHost>
<evidence type="ECO:0000250" key="1">
    <source>
        <dbReference type="UniProtKB" id="O64205"/>
    </source>
</evidence>
<evidence type="ECO:0000305" key="2"/>
<reference key="1">
    <citation type="journal article" date="1993" name="Mol. Microbiol.">
        <title>DNA sequence, structure and gene expression of mycobacteriophage L5: a phage system for mycobacterial genetics.</title>
        <authorList>
            <person name="Hatfull G.F."/>
            <person name="Sarkis G.J."/>
        </authorList>
    </citation>
    <scope>NUCLEOTIDE SEQUENCE [LARGE SCALE GENOMIC DNA]</scope>
</reference>
<sequence>MSKPWLFTVHGTGQPDPLGPGLPADTARDVLDIYRWQPIGNYPAAAFPMWPSVEKGVAELILQIELKLDADPYADFALAGYSQGAIVVGQVLKHHIINPRGRLHRFLHRLRKVIFWGNPMRQKGFAHTDEWIHQVAASDTMGILEDRLENLEQYGFEVRDYAHDGDMYASIKEDDMHEYEVAIGRIVMSARRFIGGKDSVIAQLIELGQRPIWEGIAMARAIIDALTFFAKSTQGPSWPHLYNRFPAVEFLRRI</sequence>
<name>LYSB_BPML5</name>
<gene>
    <name type="primary">12</name>
</gene>
<proteinExistence type="inferred from homology"/>
<feature type="chain" id="PRO_0000164713" description="Endolysin B">
    <location>
        <begin position="1"/>
        <end position="254"/>
    </location>
</feature>
<feature type="active site" evidence="1">
    <location>
        <position position="82"/>
    </location>
</feature>
<feature type="active site" evidence="1">
    <location>
        <position position="166"/>
    </location>
</feature>
<feature type="active site" evidence="1">
    <location>
        <position position="240"/>
    </location>
</feature>
<organism>
    <name type="scientific">Mycobacterium phage L5</name>
    <name type="common">Mycobacteriophage L5</name>
    <dbReference type="NCBI Taxonomy" id="31757"/>
    <lineage>
        <taxon>Viruses</taxon>
        <taxon>Duplodnaviria</taxon>
        <taxon>Heunggongvirae</taxon>
        <taxon>Uroviricota</taxon>
        <taxon>Caudoviricetes</taxon>
        <taxon>Fromanvirus</taxon>
    </lineage>
</organism>
<protein>
    <recommendedName>
        <fullName evidence="1">Endolysin B</fullName>
    </recommendedName>
    <alternativeName>
        <fullName evidence="2">Gene 12 protein</fullName>
    </alternativeName>
    <alternativeName>
        <fullName evidence="2">Gp12</fullName>
    </alternativeName>
    <alternativeName>
        <fullName evidence="1">Mycolylarabinogalactan esterase</fullName>
        <ecNumber evidence="1">3.1.-.-</ecNumber>
    </alternativeName>
</protein>
<keyword id="KW-0929">Antimicrobial</keyword>
<keyword id="KW-0081">Bacteriolytic enzyme</keyword>
<keyword id="KW-0204">Cytolysis</keyword>
<keyword id="KW-0578">Host cell lysis by virus</keyword>
<keyword id="KW-0378">Hydrolase</keyword>
<keyword id="KW-1185">Reference proteome</keyword>
<keyword id="KW-1188">Viral release from host cell</keyword>